<proteinExistence type="inferred from homology"/>
<accession>A0R9W6</accession>
<organism>
    <name type="scientific">Bacillus thuringiensis (strain Al Hakam)</name>
    <dbReference type="NCBI Taxonomy" id="412694"/>
    <lineage>
        <taxon>Bacteria</taxon>
        <taxon>Bacillati</taxon>
        <taxon>Bacillota</taxon>
        <taxon>Bacilli</taxon>
        <taxon>Bacillales</taxon>
        <taxon>Bacillaceae</taxon>
        <taxon>Bacillus</taxon>
        <taxon>Bacillus cereus group</taxon>
    </lineage>
</organism>
<name>UPPP2_BACAH</name>
<feature type="chain" id="PRO_0000290685" description="Undecaprenyl-diphosphatase 2">
    <location>
        <begin position="1"/>
        <end position="270"/>
    </location>
</feature>
<feature type="transmembrane region" description="Helical" evidence="1">
    <location>
        <begin position="5"/>
        <end position="25"/>
    </location>
</feature>
<feature type="transmembrane region" description="Helical" evidence="1">
    <location>
        <begin position="42"/>
        <end position="62"/>
    </location>
</feature>
<feature type="transmembrane region" description="Helical" evidence="1">
    <location>
        <begin position="89"/>
        <end position="109"/>
    </location>
</feature>
<feature type="transmembrane region" description="Helical" evidence="1">
    <location>
        <begin position="117"/>
        <end position="137"/>
    </location>
</feature>
<feature type="transmembrane region" description="Helical" evidence="1">
    <location>
        <begin position="192"/>
        <end position="212"/>
    </location>
</feature>
<feature type="transmembrane region" description="Helical" evidence="1">
    <location>
        <begin position="220"/>
        <end position="240"/>
    </location>
</feature>
<feature type="transmembrane region" description="Helical" evidence="1">
    <location>
        <begin position="250"/>
        <end position="270"/>
    </location>
</feature>
<evidence type="ECO:0000255" key="1">
    <source>
        <dbReference type="HAMAP-Rule" id="MF_01006"/>
    </source>
</evidence>
<protein>
    <recommendedName>
        <fullName evidence="1">Undecaprenyl-diphosphatase 2</fullName>
        <ecNumber evidence="1">3.6.1.27</ecNumber>
    </recommendedName>
    <alternativeName>
        <fullName evidence="1">Bacitracin resistance protein 2</fullName>
    </alternativeName>
    <alternativeName>
        <fullName evidence="1">Undecaprenyl pyrophosphate phosphatase 2</fullName>
    </alternativeName>
</protein>
<reference key="1">
    <citation type="journal article" date="2007" name="J. Bacteriol.">
        <title>The complete genome sequence of Bacillus thuringiensis Al Hakam.</title>
        <authorList>
            <person name="Challacombe J.F."/>
            <person name="Altherr M.R."/>
            <person name="Xie G."/>
            <person name="Bhotika S.S."/>
            <person name="Brown N."/>
            <person name="Bruce D."/>
            <person name="Campbell C.S."/>
            <person name="Campbell M.L."/>
            <person name="Chen J."/>
            <person name="Chertkov O."/>
            <person name="Cleland C."/>
            <person name="Dimitrijevic M."/>
            <person name="Doggett N.A."/>
            <person name="Fawcett J.J."/>
            <person name="Glavina T."/>
            <person name="Goodwin L.A."/>
            <person name="Green L.D."/>
            <person name="Han C.S."/>
            <person name="Hill K.K."/>
            <person name="Hitchcock P."/>
            <person name="Jackson P.J."/>
            <person name="Keim P."/>
            <person name="Kewalramani A.R."/>
            <person name="Longmire J."/>
            <person name="Lucas S."/>
            <person name="Malfatti S."/>
            <person name="Martinez D."/>
            <person name="McMurry K."/>
            <person name="Meincke L.J."/>
            <person name="Misra M."/>
            <person name="Moseman B.L."/>
            <person name="Mundt M."/>
            <person name="Munk A.C."/>
            <person name="Okinaka R.T."/>
            <person name="Parson-Quintana B."/>
            <person name="Reilly L.P."/>
            <person name="Richardson P."/>
            <person name="Robinson D.L."/>
            <person name="Saunders E."/>
            <person name="Tapia R."/>
            <person name="Tesmer J.G."/>
            <person name="Thayer N."/>
            <person name="Thompson L.S."/>
            <person name="Tice H."/>
            <person name="Ticknor L.O."/>
            <person name="Wills P.L."/>
            <person name="Gilna P."/>
            <person name="Brettin T.S."/>
        </authorList>
    </citation>
    <scope>NUCLEOTIDE SEQUENCE [LARGE SCALE GENOMIC DNA]</scope>
    <source>
        <strain>Al Hakam</strain>
    </source>
</reference>
<gene>
    <name evidence="1" type="primary">uppP2</name>
    <name type="ordered locus">BALH_0623</name>
</gene>
<dbReference type="EC" id="3.6.1.27" evidence="1"/>
<dbReference type="EMBL" id="CP000485">
    <property type="protein sequence ID" value="ABK84009.1"/>
    <property type="molecule type" value="Genomic_DNA"/>
</dbReference>
<dbReference type="RefSeq" id="WP_000434782.1">
    <property type="nucleotide sequence ID" value="NC_008600.1"/>
</dbReference>
<dbReference type="SMR" id="A0R9W6"/>
<dbReference type="KEGG" id="btl:BALH_0623"/>
<dbReference type="HOGENOM" id="CLU_060296_1_2_9"/>
<dbReference type="GO" id="GO:0005886">
    <property type="term" value="C:plasma membrane"/>
    <property type="evidence" value="ECO:0007669"/>
    <property type="project" value="UniProtKB-SubCell"/>
</dbReference>
<dbReference type="GO" id="GO:0050380">
    <property type="term" value="F:undecaprenyl-diphosphatase activity"/>
    <property type="evidence" value="ECO:0007669"/>
    <property type="project" value="UniProtKB-UniRule"/>
</dbReference>
<dbReference type="GO" id="GO:0071555">
    <property type="term" value="P:cell wall organization"/>
    <property type="evidence" value="ECO:0007669"/>
    <property type="project" value="UniProtKB-KW"/>
</dbReference>
<dbReference type="GO" id="GO:0009252">
    <property type="term" value="P:peptidoglycan biosynthetic process"/>
    <property type="evidence" value="ECO:0007669"/>
    <property type="project" value="UniProtKB-KW"/>
</dbReference>
<dbReference type="GO" id="GO:0008360">
    <property type="term" value="P:regulation of cell shape"/>
    <property type="evidence" value="ECO:0007669"/>
    <property type="project" value="UniProtKB-KW"/>
</dbReference>
<dbReference type="GO" id="GO:0046677">
    <property type="term" value="P:response to antibiotic"/>
    <property type="evidence" value="ECO:0007669"/>
    <property type="project" value="UniProtKB-UniRule"/>
</dbReference>
<dbReference type="HAMAP" id="MF_01006">
    <property type="entry name" value="Undec_diphosphatase"/>
    <property type="match status" value="1"/>
</dbReference>
<dbReference type="InterPro" id="IPR003824">
    <property type="entry name" value="UppP"/>
</dbReference>
<dbReference type="PANTHER" id="PTHR30622">
    <property type="entry name" value="UNDECAPRENYL-DIPHOSPHATASE"/>
    <property type="match status" value="1"/>
</dbReference>
<dbReference type="PANTHER" id="PTHR30622:SF2">
    <property type="entry name" value="UNDECAPRENYL-DIPHOSPHATASE"/>
    <property type="match status" value="1"/>
</dbReference>
<dbReference type="Pfam" id="PF02673">
    <property type="entry name" value="BacA"/>
    <property type="match status" value="1"/>
</dbReference>
<sequence>MEQFYYILKYLILGLFQGLTEPIPISSSGHLVLAQHLLGLKIEGFSFELLVNSASLLAVLLIYRNDLIRLTKNGLSYIFTRAEDAKSDFFFIIYLVIATIPAGVIGVLFKDYIDQYLKGVKMVGISLLITAVGLWIIRNLRGRKNDGDLSMKDAIIVGLAQACALIPGISRSGATIVAAMLLGMKQETALRFSFLLYIPVSLGGLLLSITDIAKDPNLDTLFVPYIVAFIATFIMTYISLKWFMNIMAKGNLKYFSFYCIIVGVLTLIFL</sequence>
<comment type="function">
    <text evidence="1">Catalyzes the dephosphorylation of undecaprenyl diphosphate (UPP). Confers resistance to bacitracin.</text>
</comment>
<comment type="catalytic activity">
    <reaction evidence="1">
        <text>di-trans,octa-cis-undecaprenyl diphosphate + H2O = di-trans,octa-cis-undecaprenyl phosphate + phosphate + H(+)</text>
        <dbReference type="Rhea" id="RHEA:28094"/>
        <dbReference type="ChEBI" id="CHEBI:15377"/>
        <dbReference type="ChEBI" id="CHEBI:15378"/>
        <dbReference type="ChEBI" id="CHEBI:43474"/>
        <dbReference type="ChEBI" id="CHEBI:58405"/>
        <dbReference type="ChEBI" id="CHEBI:60392"/>
        <dbReference type="EC" id="3.6.1.27"/>
    </reaction>
</comment>
<comment type="subcellular location">
    <subcellularLocation>
        <location evidence="1">Cell membrane</location>
        <topology evidence="1">Multi-pass membrane protein</topology>
    </subcellularLocation>
</comment>
<comment type="miscellaneous">
    <text>Bacitracin is thought to be involved in the inhibition of peptidoglycan synthesis by sequestering undecaprenyl diphosphate, thereby reducing the pool of lipid carrier available.</text>
</comment>
<comment type="similarity">
    <text evidence="1">Belongs to the UppP family.</text>
</comment>
<keyword id="KW-0046">Antibiotic resistance</keyword>
<keyword id="KW-1003">Cell membrane</keyword>
<keyword id="KW-0133">Cell shape</keyword>
<keyword id="KW-0961">Cell wall biogenesis/degradation</keyword>
<keyword id="KW-0378">Hydrolase</keyword>
<keyword id="KW-0472">Membrane</keyword>
<keyword id="KW-0573">Peptidoglycan synthesis</keyword>
<keyword id="KW-0812">Transmembrane</keyword>
<keyword id="KW-1133">Transmembrane helix</keyword>